<reference key="1">
    <citation type="journal article" date="2008" name="Genome Biol.">
        <title>The complete genome, comparative and functional analysis of Stenotrophomonas maltophilia reveals an organism heavily shielded by drug resistance determinants.</title>
        <authorList>
            <person name="Crossman L.C."/>
            <person name="Gould V.C."/>
            <person name="Dow J.M."/>
            <person name="Vernikos G.S."/>
            <person name="Okazaki A."/>
            <person name="Sebaihia M."/>
            <person name="Saunders D."/>
            <person name="Arrowsmith C."/>
            <person name="Carver T."/>
            <person name="Peters N."/>
            <person name="Adlem E."/>
            <person name="Kerhornou A."/>
            <person name="Lord A."/>
            <person name="Murphy L."/>
            <person name="Seeger K."/>
            <person name="Squares R."/>
            <person name="Rutter S."/>
            <person name="Quail M.A."/>
            <person name="Rajandream M.A."/>
            <person name="Harris D."/>
            <person name="Churcher C."/>
            <person name="Bentley S.D."/>
            <person name="Parkhill J."/>
            <person name="Thomson N.R."/>
            <person name="Avison M.B."/>
        </authorList>
    </citation>
    <scope>NUCLEOTIDE SEQUENCE [LARGE SCALE GENOMIC DNA]</scope>
    <source>
        <strain>K279a</strain>
    </source>
</reference>
<comment type="function">
    <text evidence="1">Required for insertion of 4Fe-4S clusters for at least IspG.</text>
</comment>
<comment type="cofactor">
    <cofactor evidence="1">
        <name>iron-sulfur cluster</name>
        <dbReference type="ChEBI" id="CHEBI:30408"/>
    </cofactor>
    <text evidence="1">Binds 1 iron-sulfur cluster per subunit.</text>
</comment>
<comment type="subunit">
    <text evidence="1">Homodimer.</text>
</comment>
<comment type="similarity">
    <text evidence="1">Belongs to the HesB/IscA family.</text>
</comment>
<sequence length="130" mass="13825">MSTLVSLPGATPAAAPDYQSLERPLNFTESAAAKVKSLIQEEGNPDLALRVYIEGGGCSGFQYGFEFDENRAEDDLAVQTSGVTLLVDPLSLQYLMGAEVDYTESLTGAQFVIRNPNAKTTCGCGSSFSM</sequence>
<proteinExistence type="inferred from homology"/>
<keyword id="KW-0408">Iron</keyword>
<keyword id="KW-0411">Iron-sulfur</keyword>
<keyword id="KW-0479">Metal-binding</keyword>
<keyword id="KW-1185">Reference proteome</keyword>
<gene>
    <name evidence="1" type="primary">erpA</name>
    <name type="ordered locus">Smlt4291</name>
</gene>
<name>ERPA_STRMK</name>
<dbReference type="EMBL" id="AM743169">
    <property type="protein sequence ID" value="CAQ47677.1"/>
    <property type="molecule type" value="Genomic_DNA"/>
</dbReference>
<dbReference type="RefSeq" id="WP_005411302.1">
    <property type="nucleotide sequence ID" value="NC_010943.1"/>
</dbReference>
<dbReference type="SMR" id="B2FJT4"/>
<dbReference type="EnsemblBacteria" id="CAQ47677">
    <property type="protein sequence ID" value="CAQ47677"/>
    <property type="gene ID" value="Smlt4291"/>
</dbReference>
<dbReference type="GeneID" id="93835247"/>
<dbReference type="KEGG" id="sml:Smlt4291"/>
<dbReference type="eggNOG" id="COG0316">
    <property type="taxonomic scope" value="Bacteria"/>
</dbReference>
<dbReference type="HOGENOM" id="CLU_069054_5_3_6"/>
<dbReference type="Proteomes" id="UP000008840">
    <property type="component" value="Chromosome"/>
</dbReference>
<dbReference type="GO" id="GO:0005829">
    <property type="term" value="C:cytosol"/>
    <property type="evidence" value="ECO:0007669"/>
    <property type="project" value="TreeGrafter"/>
</dbReference>
<dbReference type="GO" id="GO:0051537">
    <property type="term" value="F:2 iron, 2 sulfur cluster binding"/>
    <property type="evidence" value="ECO:0007669"/>
    <property type="project" value="TreeGrafter"/>
</dbReference>
<dbReference type="GO" id="GO:0051539">
    <property type="term" value="F:4 iron, 4 sulfur cluster binding"/>
    <property type="evidence" value="ECO:0007669"/>
    <property type="project" value="TreeGrafter"/>
</dbReference>
<dbReference type="GO" id="GO:0005506">
    <property type="term" value="F:iron ion binding"/>
    <property type="evidence" value="ECO:0007669"/>
    <property type="project" value="UniProtKB-UniRule"/>
</dbReference>
<dbReference type="GO" id="GO:0016226">
    <property type="term" value="P:iron-sulfur cluster assembly"/>
    <property type="evidence" value="ECO:0007669"/>
    <property type="project" value="UniProtKB-UniRule"/>
</dbReference>
<dbReference type="FunFam" id="2.60.300.12:FF:000002">
    <property type="entry name" value="Iron-sulfur cluster insertion protein ErpA"/>
    <property type="match status" value="1"/>
</dbReference>
<dbReference type="Gene3D" id="2.60.300.12">
    <property type="entry name" value="HesB-like domain"/>
    <property type="match status" value="1"/>
</dbReference>
<dbReference type="HAMAP" id="MF_01380">
    <property type="entry name" value="Fe_S_insert_ErpA"/>
    <property type="match status" value="1"/>
</dbReference>
<dbReference type="InterPro" id="IPR000361">
    <property type="entry name" value="FeS_biogenesis"/>
</dbReference>
<dbReference type="InterPro" id="IPR016092">
    <property type="entry name" value="FeS_cluster_insertion"/>
</dbReference>
<dbReference type="InterPro" id="IPR017870">
    <property type="entry name" value="FeS_cluster_insertion_CS"/>
</dbReference>
<dbReference type="InterPro" id="IPR023063">
    <property type="entry name" value="FeS_cluster_insertion_RrpA"/>
</dbReference>
<dbReference type="InterPro" id="IPR035903">
    <property type="entry name" value="HesB-like_dom_sf"/>
</dbReference>
<dbReference type="NCBIfam" id="TIGR00049">
    <property type="entry name" value="iron-sulfur cluster assembly accessory protein"/>
    <property type="match status" value="1"/>
</dbReference>
<dbReference type="NCBIfam" id="NF010147">
    <property type="entry name" value="PRK13623.1"/>
    <property type="match status" value="1"/>
</dbReference>
<dbReference type="PANTHER" id="PTHR43011">
    <property type="entry name" value="IRON-SULFUR CLUSTER ASSEMBLY 2 HOMOLOG, MITOCHONDRIAL"/>
    <property type="match status" value="1"/>
</dbReference>
<dbReference type="PANTHER" id="PTHR43011:SF1">
    <property type="entry name" value="IRON-SULFUR CLUSTER ASSEMBLY 2 HOMOLOG, MITOCHONDRIAL"/>
    <property type="match status" value="1"/>
</dbReference>
<dbReference type="Pfam" id="PF01521">
    <property type="entry name" value="Fe-S_biosyn"/>
    <property type="match status" value="1"/>
</dbReference>
<dbReference type="SUPFAM" id="SSF89360">
    <property type="entry name" value="HesB-like domain"/>
    <property type="match status" value="1"/>
</dbReference>
<dbReference type="PROSITE" id="PS01152">
    <property type="entry name" value="HESB"/>
    <property type="match status" value="1"/>
</dbReference>
<organism>
    <name type="scientific">Stenotrophomonas maltophilia (strain K279a)</name>
    <dbReference type="NCBI Taxonomy" id="522373"/>
    <lineage>
        <taxon>Bacteria</taxon>
        <taxon>Pseudomonadati</taxon>
        <taxon>Pseudomonadota</taxon>
        <taxon>Gammaproteobacteria</taxon>
        <taxon>Lysobacterales</taxon>
        <taxon>Lysobacteraceae</taxon>
        <taxon>Stenotrophomonas</taxon>
        <taxon>Stenotrophomonas maltophilia group</taxon>
    </lineage>
</organism>
<protein>
    <recommendedName>
        <fullName evidence="1">Iron-sulfur cluster insertion protein ErpA</fullName>
    </recommendedName>
</protein>
<feature type="chain" id="PRO_1000144940" description="Iron-sulfur cluster insertion protein ErpA">
    <location>
        <begin position="1"/>
        <end position="130"/>
    </location>
</feature>
<feature type="binding site" evidence="1">
    <location>
        <position position="58"/>
    </location>
    <ligand>
        <name>iron-sulfur cluster</name>
        <dbReference type="ChEBI" id="CHEBI:30408"/>
    </ligand>
</feature>
<feature type="binding site" evidence="1">
    <location>
        <position position="122"/>
    </location>
    <ligand>
        <name>iron-sulfur cluster</name>
        <dbReference type="ChEBI" id="CHEBI:30408"/>
    </ligand>
</feature>
<feature type="binding site" evidence="1">
    <location>
        <position position="124"/>
    </location>
    <ligand>
        <name>iron-sulfur cluster</name>
        <dbReference type="ChEBI" id="CHEBI:30408"/>
    </ligand>
</feature>
<evidence type="ECO:0000255" key="1">
    <source>
        <dbReference type="HAMAP-Rule" id="MF_01380"/>
    </source>
</evidence>
<accession>B2FJT4</accession>